<comment type="function">
    <text evidence="1">Catalyzes the attachment of proline to tRNA(Pro) in a two-step reaction: proline is first activated by ATP to form Pro-AMP and then transferred to the acceptor end of tRNA(Pro). As ProRS can inadvertently accommodate and process non-cognate amino acids such as alanine and cysteine, to avoid such errors it has two additional distinct editing activities against alanine. One activity is designated as 'pretransfer' editing and involves the tRNA(Pro)-independent hydrolysis of activated Ala-AMP. The other activity is designated 'posttransfer' editing and involves deacylation of mischarged Ala-tRNA(Pro). The misacylated Cys-tRNA(Pro) is not edited by ProRS.</text>
</comment>
<comment type="catalytic activity">
    <reaction evidence="1">
        <text>tRNA(Pro) + L-proline + ATP = L-prolyl-tRNA(Pro) + AMP + diphosphate</text>
        <dbReference type="Rhea" id="RHEA:14305"/>
        <dbReference type="Rhea" id="RHEA-COMP:9700"/>
        <dbReference type="Rhea" id="RHEA-COMP:9702"/>
        <dbReference type="ChEBI" id="CHEBI:30616"/>
        <dbReference type="ChEBI" id="CHEBI:33019"/>
        <dbReference type="ChEBI" id="CHEBI:60039"/>
        <dbReference type="ChEBI" id="CHEBI:78442"/>
        <dbReference type="ChEBI" id="CHEBI:78532"/>
        <dbReference type="ChEBI" id="CHEBI:456215"/>
        <dbReference type="EC" id="6.1.1.15"/>
    </reaction>
</comment>
<comment type="subunit">
    <text evidence="1">Homodimer.</text>
</comment>
<comment type="subcellular location">
    <subcellularLocation>
        <location evidence="1">Cytoplasm</location>
    </subcellularLocation>
</comment>
<comment type="domain">
    <text evidence="1">Consists of three domains: the N-terminal catalytic domain, the editing domain and the C-terminal anticodon-binding domain.</text>
</comment>
<comment type="similarity">
    <text evidence="1">Belongs to the class-II aminoacyl-tRNA synthetase family. ProS type 1 subfamily.</text>
</comment>
<name>SYP_PROM0</name>
<dbReference type="EC" id="6.1.1.15" evidence="1"/>
<dbReference type="EMBL" id="CP000576">
    <property type="protein sequence ID" value="ABO17158.1"/>
    <property type="molecule type" value="Genomic_DNA"/>
</dbReference>
<dbReference type="RefSeq" id="WP_011862528.1">
    <property type="nucleotide sequence ID" value="NC_009091.1"/>
</dbReference>
<dbReference type="SMR" id="A3PBN3"/>
<dbReference type="STRING" id="167546.P9301_05351"/>
<dbReference type="KEGG" id="pmg:P9301_05351"/>
<dbReference type="eggNOG" id="COG0442">
    <property type="taxonomic scope" value="Bacteria"/>
</dbReference>
<dbReference type="HOGENOM" id="CLU_016739_0_0_3"/>
<dbReference type="OrthoDB" id="9809052at2"/>
<dbReference type="Proteomes" id="UP000001430">
    <property type="component" value="Chromosome"/>
</dbReference>
<dbReference type="GO" id="GO:0005829">
    <property type="term" value="C:cytosol"/>
    <property type="evidence" value="ECO:0007669"/>
    <property type="project" value="TreeGrafter"/>
</dbReference>
<dbReference type="GO" id="GO:0002161">
    <property type="term" value="F:aminoacyl-tRNA deacylase activity"/>
    <property type="evidence" value="ECO:0007669"/>
    <property type="project" value="InterPro"/>
</dbReference>
<dbReference type="GO" id="GO:0005524">
    <property type="term" value="F:ATP binding"/>
    <property type="evidence" value="ECO:0007669"/>
    <property type="project" value="UniProtKB-UniRule"/>
</dbReference>
<dbReference type="GO" id="GO:0004827">
    <property type="term" value="F:proline-tRNA ligase activity"/>
    <property type="evidence" value="ECO:0007669"/>
    <property type="project" value="UniProtKB-UniRule"/>
</dbReference>
<dbReference type="GO" id="GO:0006433">
    <property type="term" value="P:prolyl-tRNA aminoacylation"/>
    <property type="evidence" value="ECO:0007669"/>
    <property type="project" value="UniProtKB-UniRule"/>
</dbReference>
<dbReference type="CDD" id="cd04334">
    <property type="entry name" value="ProRS-INS"/>
    <property type="match status" value="1"/>
</dbReference>
<dbReference type="CDD" id="cd00861">
    <property type="entry name" value="ProRS_anticodon_short"/>
    <property type="match status" value="1"/>
</dbReference>
<dbReference type="Gene3D" id="3.40.50.800">
    <property type="entry name" value="Anticodon-binding domain"/>
    <property type="match status" value="1"/>
</dbReference>
<dbReference type="Gene3D" id="3.30.930.10">
    <property type="entry name" value="Bira Bifunctional Protein, Domain 2"/>
    <property type="match status" value="2"/>
</dbReference>
<dbReference type="HAMAP" id="MF_01569">
    <property type="entry name" value="Pro_tRNA_synth_type1"/>
    <property type="match status" value="1"/>
</dbReference>
<dbReference type="InterPro" id="IPR002314">
    <property type="entry name" value="aa-tRNA-synt_IIb"/>
</dbReference>
<dbReference type="InterPro" id="IPR006195">
    <property type="entry name" value="aa-tRNA-synth_II"/>
</dbReference>
<dbReference type="InterPro" id="IPR045864">
    <property type="entry name" value="aa-tRNA-synth_II/BPL/LPL"/>
</dbReference>
<dbReference type="InterPro" id="IPR004154">
    <property type="entry name" value="Anticodon-bd"/>
</dbReference>
<dbReference type="InterPro" id="IPR036621">
    <property type="entry name" value="Anticodon-bd_dom_sf"/>
</dbReference>
<dbReference type="InterPro" id="IPR002316">
    <property type="entry name" value="Pro-tRNA-ligase_IIa"/>
</dbReference>
<dbReference type="InterPro" id="IPR004500">
    <property type="entry name" value="Pro-tRNA-synth_IIa_bac-type"/>
</dbReference>
<dbReference type="InterPro" id="IPR023717">
    <property type="entry name" value="Pro-tRNA-Synthase_IIa_type1"/>
</dbReference>
<dbReference type="InterPro" id="IPR050062">
    <property type="entry name" value="Pro-tRNA_synthetase"/>
</dbReference>
<dbReference type="InterPro" id="IPR044140">
    <property type="entry name" value="ProRS_anticodon_short"/>
</dbReference>
<dbReference type="InterPro" id="IPR036754">
    <property type="entry name" value="YbaK/aa-tRNA-synt-asso_dom_sf"/>
</dbReference>
<dbReference type="InterPro" id="IPR007214">
    <property type="entry name" value="YbaK/aa-tRNA-synth-assoc-dom"/>
</dbReference>
<dbReference type="NCBIfam" id="NF006625">
    <property type="entry name" value="PRK09194.1"/>
    <property type="match status" value="1"/>
</dbReference>
<dbReference type="NCBIfam" id="TIGR00409">
    <property type="entry name" value="proS_fam_II"/>
    <property type="match status" value="1"/>
</dbReference>
<dbReference type="PANTHER" id="PTHR42753">
    <property type="entry name" value="MITOCHONDRIAL RIBOSOME PROTEIN L39/PROLYL-TRNA LIGASE FAMILY MEMBER"/>
    <property type="match status" value="1"/>
</dbReference>
<dbReference type="PANTHER" id="PTHR42753:SF2">
    <property type="entry name" value="PROLINE--TRNA LIGASE"/>
    <property type="match status" value="1"/>
</dbReference>
<dbReference type="Pfam" id="PF03129">
    <property type="entry name" value="HGTP_anticodon"/>
    <property type="match status" value="1"/>
</dbReference>
<dbReference type="Pfam" id="PF00587">
    <property type="entry name" value="tRNA-synt_2b"/>
    <property type="match status" value="1"/>
</dbReference>
<dbReference type="Pfam" id="PF04073">
    <property type="entry name" value="tRNA_edit"/>
    <property type="match status" value="1"/>
</dbReference>
<dbReference type="PRINTS" id="PR01046">
    <property type="entry name" value="TRNASYNTHPRO"/>
</dbReference>
<dbReference type="SUPFAM" id="SSF52954">
    <property type="entry name" value="Class II aaRS ABD-related"/>
    <property type="match status" value="1"/>
</dbReference>
<dbReference type="SUPFAM" id="SSF55681">
    <property type="entry name" value="Class II aaRS and biotin synthetases"/>
    <property type="match status" value="1"/>
</dbReference>
<dbReference type="SUPFAM" id="SSF55826">
    <property type="entry name" value="YbaK/ProRS associated domain"/>
    <property type="match status" value="1"/>
</dbReference>
<dbReference type="PROSITE" id="PS50862">
    <property type="entry name" value="AA_TRNA_LIGASE_II"/>
    <property type="match status" value="1"/>
</dbReference>
<keyword id="KW-0030">Aminoacyl-tRNA synthetase</keyword>
<keyword id="KW-0067">ATP-binding</keyword>
<keyword id="KW-0963">Cytoplasm</keyword>
<keyword id="KW-0436">Ligase</keyword>
<keyword id="KW-0547">Nucleotide-binding</keyword>
<keyword id="KW-0648">Protein biosynthesis</keyword>
<keyword id="KW-1185">Reference proteome</keyword>
<evidence type="ECO:0000255" key="1">
    <source>
        <dbReference type="HAMAP-Rule" id="MF_01569"/>
    </source>
</evidence>
<proteinExistence type="inferred from homology"/>
<reference key="1">
    <citation type="journal article" date="2007" name="PLoS Genet.">
        <title>Patterns and implications of gene gain and loss in the evolution of Prochlorococcus.</title>
        <authorList>
            <person name="Kettler G.C."/>
            <person name="Martiny A.C."/>
            <person name="Huang K."/>
            <person name="Zucker J."/>
            <person name="Coleman M.L."/>
            <person name="Rodrigue S."/>
            <person name="Chen F."/>
            <person name="Lapidus A."/>
            <person name="Ferriera S."/>
            <person name="Johnson J."/>
            <person name="Steglich C."/>
            <person name="Church G.M."/>
            <person name="Richardson P."/>
            <person name="Chisholm S.W."/>
        </authorList>
    </citation>
    <scope>NUCLEOTIDE SEQUENCE [LARGE SCALE GENOMIC DNA]</scope>
    <source>
        <strain>MIT 9301</strain>
    </source>
</reference>
<gene>
    <name evidence="1" type="primary">proS</name>
    <name type="ordered locus">P9301_05351</name>
</gene>
<protein>
    <recommendedName>
        <fullName evidence="1">Proline--tRNA ligase</fullName>
        <ecNumber evidence="1">6.1.1.15</ecNumber>
    </recommendedName>
    <alternativeName>
        <fullName evidence="1">Prolyl-tRNA synthetase</fullName>
        <shortName evidence="1">ProRS</shortName>
    </alternativeName>
</protein>
<accession>A3PBN3</accession>
<feature type="chain" id="PRO_1000069152" description="Proline--tRNA ligase">
    <location>
        <begin position="1"/>
        <end position="600"/>
    </location>
</feature>
<organism>
    <name type="scientific">Prochlorococcus marinus (strain MIT 9301)</name>
    <dbReference type="NCBI Taxonomy" id="167546"/>
    <lineage>
        <taxon>Bacteria</taxon>
        <taxon>Bacillati</taxon>
        <taxon>Cyanobacteriota</taxon>
        <taxon>Cyanophyceae</taxon>
        <taxon>Synechococcales</taxon>
        <taxon>Prochlorococcaceae</taxon>
        <taxon>Prochlorococcus</taxon>
    </lineage>
</organism>
<sequence length="600" mass="67939">MRVTTSFPLGTLRDTPSEAEIISHQLLLKAGYIRRVNSGIYAYMPLMLRVVEKISAIIEKELNSIGCTKLLLPQLHPADLWKKSERWEGYTAGEGIMFNLKDRQGKEFGLAPTHEEVITSIASETINSYKQLPQCFYQIQTKFRDEIRPRFGLMRSREFIMKDGYSFHSSENDLASFYEKVGNAYENIFESCGLQTVGVDADSGAIGGASSKEFMVTADAGEDSILFTQSGSYAANIEKAVSLPSQPIPLKDNIAEWLETPNQKTIQEVCDNNNLDPSQIIKVVILLAQFENEFNAPILACVRGDQHINEVKLFNLINKLHHFNLLNLKKIEDKNTIEKNLVDLPLGFIGPDLDNKTIKASSNWEKKWTRIIDHSASDLSKFISGGNKVNFHKVFQEFSFNSKNYLIGDIRNAKKGDKISIDDDEELKEKKGIEIGHIFQLGQKYSEKLNAKFSDKDGQLKNLWMGCYGIGVTRIAQAAIEQNHDQKGICWPIQISPFEVIIIPTNLKDPIQSDLTEQIYNNFLINKIDVLLDDRNDRAGVKFKDAELIGIPFQVIIGRDSINKEVELFCRTNNTKIKISTDKLLETFISESEIMYNKKS</sequence>